<comment type="function">
    <text evidence="1">Transaldolase is important for the balance of metabolites in the pentose-phosphate pathway.</text>
</comment>
<comment type="catalytic activity">
    <reaction evidence="1">
        <text>D-sedoheptulose 7-phosphate + D-glyceraldehyde 3-phosphate = D-erythrose 4-phosphate + beta-D-fructose 6-phosphate</text>
        <dbReference type="Rhea" id="RHEA:17053"/>
        <dbReference type="ChEBI" id="CHEBI:16897"/>
        <dbReference type="ChEBI" id="CHEBI:57483"/>
        <dbReference type="ChEBI" id="CHEBI:57634"/>
        <dbReference type="ChEBI" id="CHEBI:59776"/>
        <dbReference type="EC" id="2.2.1.2"/>
    </reaction>
</comment>
<comment type="pathway">
    <text evidence="1">Carbohydrate degradation; pentose phosphate pathway; D-glyceraldehyde 3-phosphate and beta-D-fructose 6-phosphate from D-ribose 5-phosphate and D-xylulose 5-phosphate (non-oxidative stage): step 2/3.</text>
</comment>
<comment type="subcellular location">
    <subcellularLocation>
        <location evidence="1">Cytoplasm</location>
    </subcellularLocation>
</comment>
<comment type="similarity">
    <text evidence="1">Belongs to the transaldolase family. Type 2 subfamily.</text>
</comment>
<accession>Q829U5</accession>
<feature type="chain" id="PRO_0000173640" description="Transaldolase 2">
    <location>
        <begin position="1"/>
        <end position="372"/>
    </location>
</feature>
<feature type="active site" description="Schiff-base intermediate with substrate" evidence="1">
    <location>
        <position position="140"/>
    </location>
</feature>
<dbReference type="EC" id="2.2.1.2" evidence="1"/>
<dbReference type="EMBL" id="BA000030">
    <property type="protein sequence ID" value="BAC74025.1"/>
    <property type="molecule type" value="Genomic_DNA"/>
</dbReference>
<dbReference type="SMR" id="Q829U5"/>
<dbReference type="GeneID" id="41543389"/>
<dbReference type="KEGG" id="sma:SAVERM_6314"/>
<dbReference type="eggNOG" id="COG0176">
    <property type="taxonomic scope" value="Bacteria"/>
</dbReference>
<dbReference type="HOGENOM" id="CLU_050771_1_0_11"/>
<dbReference type="OrthoDB" id="9809101at2"/>
<dbReference type="UniPathway" id="UPA00115">
    <property type="reaction ID" value="UER00414"/>
</dbReference>
<dbReference type="Proteomes" id="UP000000428">
    <property type="component" value="Chromosome"/>
</dbReference>
<dbReference type="GO" id="GO:0005737">
    <property type="term" value="C:cytoplasm"/>
    <property type="evidence" value="ECO:0007669"/>
    <property type="project" value="UniProtKB-SubCell"/>
</dbReference>
<dbReference type="GO" id="GO:0004801">
    <property type="term" value="F:transaldolase activity"/>
    <property type="evidence" value="ECO:0007669"/>
    <property type="project" value="UniProtKB-UniRule"/>
</dbReference>
<dbReference type="GO" id="GO:0005975">
    <property type="term" value="P:carbohydrate metabolic process"/>
    <property type="evidence" value="ECO:0007669"/>
    <property type="project" value="InterPro"/>
</dbReference>
<dbReference type="GO" id="GO:0006098">
    <property type="term" value="P:pentose-phosphate shunt"/>
    <property type="evidence" value="ECO:0007669"/>
    <property type="project" value="UniProtKB-UniRule"/>
</dbReference>
<dbReference type="CDD" id="cd00955">
    <property type="entry name" value="Transaldolase_like"/>
    <property type="match status" value="1"/>
</dbReference>
<dbReference type="Gene3D" id="3.20.20.70">
    <property type="entry name" value="Aldolase class I"/>
    <property type="match status" value="1"/>
</dbReference>
<dbReference type="HAMAP" id="MF_00493">
    <property type="entry name" value="Transaldolase_2"/>
    <property type="match status" value="1"/>
</dbReference>
<dbReference type="InterPro" id="IPR013785">
    <property type="entry name" value="Aldolase_TIM"/>
</dbReference>
<dbReference type="InterPro" id="IPR001585">
    <property type="entry name" value="TAL/FSA"/>
</dbReference>
<dbReference type="InterPro" id="IPR004732">
    <property type="entry name" value="Transaldolase_2"/>
</dbReference>
<dbReference type="InterPro" id="IPR018225">
    <property type="entry name" value="Transaldolase_AS"/>
</dbReference>
<dbReference type="NCBIfam" id="NF002881">
    <property type="entry name" value="PRK03343.1"/>
    <property type="match status" value="1"/>
</dbReference>
<dbReference type="NCBIfam" id="TIGR00876">
    <property type="entry name" value="tal_mycobact"/>
    <property type="match status" value="1"/>
</dbReference>
<dbReference type="PANTHER" id="PTHR10683">
    <property type="entry name" value="TRANSALDOLASE"/>
    <property type="match status" value="1"/>
</dbReference>
<dbReference type="PANTHER" id="PTHR10683:SF31">
    <property type="entry name" value="TRANSALDOLASE"/>
    <property type="match status" value="1"/>
</dbReference>
<dbReference type="Pfam" id="PF00923">
    <property type="entry name" value="TAL_FSA"/>
    <property type="match status" value="1"/>
</dbReference>
<dbReference type="PIRSF" id="PIRSF036915">
    <property type="entry name" value="Trnald_Bac_Plnt"/>
    <property type="match status" value="1"/>
</dbReference>
<dbReference type="SUPFAM" id="SSF51569">
    <property type="entry name" value="Aldolase"/>
    <property type="match status" value="1"/>
</dbReference>
<dbReference type="PROSITE" id="PS01054">
    <property type="entry name" value="TRANSALDOLASE_1"/>
    <property type="match status" value="1"/>
</dbReference>
<keyword id="KW-0963">Cytoplasm</keyword>
<keyword id="KW-0570">Pentose shunt</keyword>
<keyword id="KW-1185">Reference proteome</keyword>
<keyword id="KW-0704">Schiff base</keyword>
<keyword id="KW-0808">Transferase</keyword>
<organism>
    <name type="scientific">Streptomyces avermitilis (strain ATCC 31267 / DSM 46492 / JCM 5070 / NBRC 14893 / NCIMB 12804 / NRRL 8165 / MA-4680)</name>
    <dbReference type="NCBI Taxonomy" id="227882"/>
    <lineage>
        <taxon>Bacteria</taxon>
        <taxon>Bacillati</taxon>
        <taxon>Actinomycetota</taxon>
        <taxon>Actinomycetes</taxon>
        <taxon>Kitasatosporales</taxon>
        <taxon>Streptomycetaceae</taxon>
        <taxon>Streptomyces</taxon>
    </lineage>
</organism>
<gene>
    <name evidence="1" type="primary">tal2</name>
    <name type="ordered locus">SAV_6314</name>
</gene>
<protein>
    <recommendedName>
        <fullName evidence="1">Transaldolase 2</fullName>
        <ecNumber evidence="1">2.2.1.2</ecNumber>
    </recommendedName>
</protein>
<reference key="1">
    <citation type="journal article" date="2001" name="Proc. Natl. Acad. Sci. U.S.A.">
        <title>Genome sequence of an industrial microorganism Streptomyces avermitilis: deducing the ability of producing secondary metabolites.</title>
        <authorList>
            <person name="Omura S."/>
            <person name="Ikeda H."/>
            <person name="Ishikawa J."/>
            <person name="Hanamoto A."/>
            <person name="Takahashi C."/>
            <person name="Shinose M."/>
            <person name="Takahashi Y."/>
            <person name="Horikawa H."/>
            <person name="Nakazawa H."/>
            <person name="Osonoe T."/>
            <person name="Kikuchi H."/>
            <person name="Shiba T."/>
            <person name="Sakaki Y."/>
            <person name="Hattori M."/>
        </authorList>
    </citation>
    <scope>NUCLEOTIDE SEQUENCE [LARGE SCALE GENOMIC DNA]</scope>
    <source>
        <strain>ATCC 31267 / DSM 46492 / JCM 5070 / NBRC 14893 / NCIMB 12804 / NRRL 8165 / MA-4680</strain>
    </source>
</reference>
<reference key="2">
    <citation type="journal article" date="2003" name="Nat. Biotechnol.">
        <title>Complete genome sequence and comparative analysis of the industrial microorganism Streptomyces avermitilis.</title>
        <authorList>
            <person name="Ikeda H."/>
            <person name="Ishikawa J."/>
            <person name="Hanamoto A."/>
            <person name="Shinose M."/>
            <person name="Kikuchi H."/>
            <person name="Shiba T."/>
            <person name="Sakaki Y."/>
            <person name="Hattori M."/>
            <person name="Omura S."/>
        </authorList>
    </citation>
    <scope>NUCLEOTIDE SEQUENCE [LARGE SCALE GENOMIC DNA]</scope>
    <source>
        <strain>ATCC 31267 / DSM 46492 / JCM 5070 / NBRC 14893 / NCIMB 12804 / NRRL 8165 / MA-4680</strain>
    </source>
</reference>
<name>TAL2_STRAW</name>
<proteinExistence type="inferred from homology"/>
<sequence length="372" mass="40667">MTDALKRLSKEGVAIWLDDLSRKRITSGNLAELIDQQHVVGVTTNPSIFQKAISQGDGYDQQVSDLAARRVTVEEAIRMITTADVRDAADILRPVFDATDGQDGRVSIEVDPRLAHNTKATVAEAKQLAWLVDRPNTLIKIPATKAGIPAITEVIGLGISVNVTLIFSLERYRMVMDAYLAGLEKAKERGLDLSKIHSVASFFVSRVDTEIDKRIDALGTPEAKAARGKAGLANARLAYEAYEAVFSTDRWLALDKAQANKQRPLWASTGVKDPAYKDTMYVEELVAPNTVNTMPEATLEATADHGEIRGNTIAGTYEQARADLDAVEKLGIAYDDVVQLLEEEGVDKFEASWNDLLKSTEAELQRLAPSEG</sequence>
<evidence type="ECO:0000255" key="1">
    <source>
        <dbReference type="HAMAP-Rule" id="MF_00493"/>
    </source>
</evidence>